<protein>
    <recommendedName>
        <fullName evidence="1">Integration host factor subunit beta</fullName>
        <shortName evidence="1">IHF-beta</shortName>
    </recommendedName>
</protein>
<keyword id="KW-0233">DNA recombination</keyword>
<keyword id="KW-0238">DNA-binding</keyword>
<keyword id="KW-1185">Reference proteome</keyword>
<keyword id="KW-0804">Transcription</keyword>
<keyword id="KW-0805">Transcription regulation</keyword>
<keyword id="KW-0810">Translation regulation</keyword>
<name>IHFB_ECO45</name>
<feature type="chain" id="PRO_1000122209" description="Integration host factor subunit beta">
    <location>
        <begin position="1"/>
        <end position="94"/>
    </location>
</feature>
<organism>
    <name type="scientific">Escherichia coli O45:K1 (strain S88 / ExPEC)</name>
    <dbReference type="NCBI Taxonomy" id="585035"/>
    <lineage>
        <taxon>Bacteria</taxon>
        <taxon>Pseudomonadati</taxon>
        <taxon>Pseudomonadota</taxon>
        <taxon>Gammaproteobacteria</taxon>
        <taxon>Enterobacterales</taxon>
        <taxon>Enterobacteriaceae</taxon>
        <taxon>Escherichia</taxon>
    </lineage>
</organism>
<proteinExistence type="inferred from homology"/>
<gene>
    <name evidence="1" type="primary">ihfB</name>
    <name evidence="1" type="synonym">himD</name>
    <name type="ordered locus">ECS88_0940</name>
</gene>
<reference key="1">
    <citation type="journal article" date="2009" name="PLoS Genet.">
        <title>Organised genome dynamics in the Escherichia coli species results in highly diverse adaptive paths.</title>
        <authorList>
            <person name="Touchon M."/>
            <person name="Hoede C."/>
            <person name="Tenaillon O."/>
            <person name="Barbe V."/>
            <person name="Baeriswyl S."/>
            <person name="Bidet P."/>
            <person name="Bingen E."/>
            <person name="Bonacorsi S."/>
            <person name="Bouchier C."/>
            <person name="Bouvet O."/>
            <person name="Calteau A."/>
            <person name="Chiapello H."/>
            <person name="Clermont O."/>
            <person name="Cruveiller S."/>
            <person name="Danchin A."/>
            <person name="Diard M."/>
            <person name="Dossat C."/>
            <person name="Karoui M.E."/>
            <person name="Frapy E."/>
            <person name="Garry L."/>
            <person name="Ghigo J.M."/>
            <person name="Gilles A.M."/>
            <person name="Johnson J."/>
            <person name="Le Bouguenec C."/>
            <person name="Lescat M."/>
            <person name="Mangenot S."/>
            <person name="Martinez-Jehanne V."/>
            <person name="Matic I."/>
            <person name="Nassif X."/>
            <person name="Oztas S."/>
            <person name="Petit M.A."/>
            <person name="Pichon C."/>
            <person name="Rouy Z."/>
            <person name="Ruf C.S."/>
            <person name="Schneider D."/>
            <person name="Tourret J."/>
            <person name="Vacherie B."/>
            <person name="Vallenet D."/>
            <person name="Medigue C."/>
            <person name="Rocha E.P.C."/>
            <person name="Denamur E."/>
        </authorList>
    </citation>
    <scope>NUCLEOTIDE SEQUENCE [LARGE SCALE GENOMIC DNA]</scope>
    <source>
        <strain>S88 / ExPEC</strain>
    </source>
</reference>
<evidence type="ECO:0000255" key="1">
    <source>
        <dbReference type="HAMAP-Rule" id="MF_00381"/>
    </source>
</evidence>
<dbReference type="EMBL" id="CU928161">
    <property type="protein sequence ID" value="CAR02272.1"/>
    <property type="molecule type" value="Genomic_DNA"/>
</dbReference>
<dbReference type="RefSeq" id="WP_000167336.1">
    <property type="nucleotide sequence ID" value="NC_011742.1"/>
</dbReference>
<dbReference type="EMDB" id="EMD-8827"/>
<dbReference type="SMR" id="B7MHM1"/>
<dbReference type="GeneID" id="93776505"/>
<dbReference type="KEGG" id="ecz:ECS88_0940"/>
<dbReference type="HOGENOM" id="CLU_105066_2_0_6"/>
<dbReference type="Proteomes" id="UP000000747">
    <property type="component" value="Chromosome"/>
</dbReference>
<dbReference type="GO" id="GO:0005694">
    <property type="term" value="C:chromosome"/>
    <property type="evidence" value="ECO:0007669"/>
    <property type="project" value="InterPro"/>
</dbReference>
<dbReference type="GO" id="GO:0005829">
    <property type="term" value="C:cytosol"/>
    <property type="evidence" value="ECO:0007669"/>
    <property type="project" value="TreeGrafter"/>
</dbReference>
<dbReference type="GO" id="GO:0003677">
    <property type="term" value="F:DNA binding"/>
    <property type="evidence" value="ECO:0007669"/>
    <property type="project" value="UniProtKB-UniRule"/>
</dbReference>
<dbReference type="GO" id="GO:0030527">
    <property type="term" value="F:structural constituent of chromatin"/>
    <property type="evidence" value="ECO:0007669"/>
    <property type="project" value="InterPro"/>
</dbReference>
<dbReference type="GO" id="GO:0006310">
    <property type="term" value="P:DNA recombination"/>
    <property type="evidence" value="ECO:0007669"/>
    <property type="project" value="UniProtKB-UniRule"/>
</dbReference>
<dbReference type="GO" id="GO:0006355">
    <property type="term" value="P:regulation of DNA-templated transcription"/>
    <property type="evidence" value="ECO:0007669"/>
    <property type="project" value="UniProtKB-UniRule"/>
</dbReference>
<dbReference type="GO" id="GO:0006417">
    <property type="term" value="P:regulation of translation"/>
    <property type="evidence" value="ECO:0007669"/>
    <property type="project" value="UniProtKB-UniRule"/>
</dbReference>
<dbReference type="CDD" id="cd13836">
    <property type="entry name" value="IHF_B"/>
    <property type="match status" value="1"/>
</dbReference>
<dbReference type="FunFam" id="4.10.520.10:FF:000003">
    <property type="entry name" value="Integration host factor subunit beta"/>
    <property type="match status" value="1"/>
</dbReference>
<dbReference type="Gene3D" id="4.10.520.10">
    <property type="entry name" value="IHF-like DNA-binding proteins"/>
    <property type="match status" value="1"/>
</dbReference>
<dbReference type="HAMAP" id="MF_00381">
    <property type="entry name" value="IHF_beta"/>
    <property type="match status" value="1"/>
</dbReference>
<dbReference type="InterPro" id="IPR000119">
    <property type="entry name" value="Hist_DNA-bd"/>
</dbReference>
<dbReference type="InterPro" id="IPR020816">
    <property type="entry name" value="Histone-like_DNA-bd_CS"/>
</dbReference>
<dbReference type="InterPro" id="IPR010992">
    <property type="entry name" value="IHF-like_DNA-bd_dom_sf"/>
</dbReference>
<dbReference type="InterPro" id="IPR005685">
    <property type="entry name" value="IHF_beta"/>
</dbReference>
<dbReference type="NCBIfam" id="TIGR00988">
    <property type="entry name" value="hip"/>
    <property type="match status" value="1"/>
</dbReference>
<dbReference type="NCBIfam" id="NF001222">
    <property type="entry name" value="PRK00199.1"/>
    <property type="match status" value="1"/>
</dbReference>
<dbReference type="PANTHER" id="PTHR33175">
    <property type="entry name" value="DNA-BINDING PROTEIN HU"/>
    <property type="match status" value="1"/>
</dbReference>
<dbReference type="PANTHER" id="PTHR33175:SF5">
    <property type="entry name" value="INTEGRATION HOST FACTOR SUBUNIT BETA"/>
    <property type="match status" value="1"/>
</dbReference>
<dbReference type="Pfam" id="PF00216">
    <property type="entry name" value="Bac_DNA_binding"/>
    <property type="match status" value="1"/>
</dbReference>
<dbReference type="PRINTS" id="PR01727">
    <property type="entry name" value="DNABINDINGHU"/>
</dbReference>
<dbReference type="SMART" id="SM00411">
    <property type="entry name" value="BHL"/>
    <property type="match status" value="1"/>
</dbReference>
<dbReference type="SUPFAM" id="SSF47729">
    <property type="entry name" value="IHF-like DNA-binding proteins"/>
    <property type="match status" value="1"/>
</dbReference>
<dbReference type="PROSITE" id="PS00045">
    <property type="entry name" value="HISTONE_LIKE"/>
    <property type="match status" value="1"/>
</dbReference>
<comment type="function">
    <text evidence="1">This protein is one of the two subunits of integration host factor, a specific DNA-binding protein that functions in genetic recombination as well as in transcriptional and translational control.</text>
</comment>
<comment type="subunit">
    <text evidence="1">Heterodimer of an alpha and a beta chain.</text>
</comment>
<comment type="similarity">
    <text evidence="1">Belongs to the bacterial histone-like protein family.</text>
</comment>
<accession>B7MHM1</accession>
<sequence>MTKSELIERLATQQSHIPAKTVEDAVKEMLEHMASTLAQGERIEIRGFGSFSLHYRAPRTGRNPKTGDKVELEGKYVPHFKPGKELRDRANIYG</sequence>